<sequence length="269" mass="28901">MNIVSNRQEQAFSNPLAMRAASRNGSWTRETSGAALGYVQANLAILPSALADDFLRFCVRNPKACPLVGISEKGSPRIPDLGVDLDIRTDVPRYRVWEDGELAAEPTDISDLWSDDLVVFAIGCSFSFEEALIANGIGLRHVAEGHNVAMYRTNIECVPAGPFSGPMVVSMRPLAPADAIRAVQITSRMPAVHGAPIHIGLPASIGIENLDQPDYGDPTRIMPDEMPVFWACGVTPQAVIQAARPKFAITHAPGCMLVTDKPNAALIAF</sequence>
<comment type="similarity">
    <text evidence="1">Belongs to the D-glutamate cyclase family.</text>
</comment>
<evidence type="ECO:0000255" key="1">
    <source>
        <dbReference type="HAMAP-Rule" id="MF_01830"/>
    </source>
</evidence>
<organism>
    <name type="scientific">Rhizobium johnstonii (strain DSM 114642 / LMG 32736 / 3841)</name>
    <name type="common">Rhizobium leguminosarum bv. viciae</name>
    <dbReference type="NCBI Taxonomy" id="216596"/>
    <lineage>
        <taxon>Bacteria</taxon>
        <taxon>Pseudomonadati</taxon>
        <taxon>Pseudomonadota</taxon>
        <taxon>Alphaproteobacteria</taxon>
        <taxon>Hyphomicrobiales</taxon>
        <taxon>Rhizobiaceae</taxon>
        <taxon>Rhizobium/Agrobacterium group</taxon>
        <taxon>Rhizobium</taxon>
        <taxon>Rhizobium johnstonii</taxon>
    </lineage>
</organism>
<name>Y2444_RHIJ3</name>
<keyword id="KW-0456">Lyase</keyword>
<gene>
    <name type="ordered locus">RL2444</name>
</gene>
<feature type="chain" id="PRO_1000070414" description="Putative hydro-lyase RL2444">
    <location>
        <begin position="1"/>
        <end position="269"/>
    </location>
</feature>
<accession>Q1MGI5</accession>
<protein>
    <recommendedName>
        <fullName evidence="1">Putative hydro-lyase RL2444</fullName>
        <ecNumber evidence="1">4.2.1.-</ecNumber>
    </recommendedName>
</protein>
<proteinExistence type="inferred from homology"/>
<reference key="1">
    <citation type="journal article" date="2006" name="Genome Biol.">
        <title>The genome of Rhizobium leguminosarum has recognizable core and accessory components.</title>
        <authorList>
            <person name="Young J.P.W."/>
            <person name="Crossman L.C."/>
            <person name="Johnston A.W.B."/>
            <person name="Thomson N.R."/>
            <person name="Ghazoui Z.F."/>
            <person name="Hull K.H."/>
            <person name="Wexler M."/>
            <person name="Curson A.R.J."/>
            <person name="Todd J.D."/>
            <person name="Poole P.S."/>
            <person name="Mauchline T.H."/>
            <person name="East A.K."/>
            <person name="Quail M.A."/>
            <person name="Churcher C."/>
            <person name="Arrowsmith C."/>
            <person name="Cherevach I."/>
            <person name="Chillingworth T."/>
            <person name="Clarke K."/>
            <person name="Cronin A."/>
            <person name="Davis P."/>
            <person name="Fraser A."/>
            <person name="Hance Z."/>
            <person name="Hauser H."/>
            <person name="Jagels K."/>
            <person name="Moule S."/>
            <person name="Mungall K."/>
            <person name="Norbertczak H."/>
            <person name="Rabbinowitsch E."/>
            <person name="Sanders M."/>
            <person name="Simmonds M."/>
            <person name="Whitehead S."/>
            <person name="Parkhill J."/>
        </authorList>
    </citation>
    <scope>NUCLEOTIDE SEQUENCE [LARGE SCALE GENOMIC DNA]</scope>
    <source>
        <strain>DSM 114642 / LMG 32736 / 3841</strain>
    </source>
</reference>
<dbReference type="EC" id="4.2.1.-" evidence="1"/>
<dbReference type="EMBL" id="AM236080">
    <property type="protein sequence ID" value="CAK07935.1"/>
    <property type="molecule type" value="Genomic_DNA"/>
</dbReference>
<dbReference type="SMR" id="Q1MGI5"/>
<dbReference type="EnsemblBacteria" id="CAK07935">
    <property type="protein sequence ID" value="CAK07935"/>
    <property type="gene ID" value="RL2444"/>
</dbReference>
<dbReference type="KEGG" id="rle:RL2444"/>
<dbReference type="eggNOG" id="COG4336">
    <property type="taxonomic scope" value="Bacteria"/>
</dbReference>
<dbReference type="HOGENOM" id="CLU_059759_0_0_5"/>
<dbReference type="Proteomes" id="UP000006575">
    <property type="component" value="Chromosome"/>
</dbReference>
<dbReference type="GO" id="GO:0016829">
    <property type="term" value="F:lyase activity"/>
    <property type="evidence" value="ECO:0007669"/>
    <property type="project" value="UniProtKB-KW"/>
</dbReference>
<dbReference type="FunFam" id="3.30.2040.10:FF:000001">
    <property type="entry name" value="D-glutamate cyclase, mitochondrial"/>
    <property type="match status" value="1"/>
</dbReference>
<dbReference type="Gene3D" id="3.40.1640.10">
    <property type="entry name" value="PSTPO5379-like"/>
    <property type="match status" value="1"/>
</dbReference>
<dbReference type="Gene3D" id="3.30.2040.10">
    <property type="entry name" value="PSTPO5379-like domain"/>
    <property type="match status" value="1"/>
</dbReference>
<dbReference type="HAMAP" id="MF_01830">
    <property type="entry name" value="Hydro_lyase"/>
    <property type="match status" value="1"/>
</dbReference>
<dbReference type="InterPro" id="IPR009906">
    <property type="entry name" value="D-Glu_cyclase"/>
</dbReference>
<dbReference type="InterPro" id="IPR038021">
    <property type="entry name" value="Putative_hydro-lyase"/>
</dbReference>
<dbReference type="InterPro" id="IPR016938">
    <property type="entry name" value="UPF0317"/>
</dbReference>
<dbReference type="NCBIfam" id="NF003969">
    <property type="entry name" value="PRK05463.1"/>
    <property type="match status" value="1"/>
</dbReference>
<dbReference type="PANTHER" id="PTHR32022">
    <property type="entry name" value="D-GLUTAMATE CYCLASE, MITOCHONDRIAL"/>
    <property type="match status" value="1"/>
</dbReference>
<dbReference type="PANTHER" id="PTHR32022:SF10">
    <property type="entry name" value="D-GLUTAMATE CYCLASE, MITOCHONDRIAL"/>
    <property type="match status" value="1"/>
</dbReference>
<dbReference type="Pfam" id="PF07286">
    <property type="entry name" value="D-Glu_cyclase"/>
    <property type="match status" value="1"/>
</dbReference>
<dbReference type="PIRSF" id="PIRSF029755">
    <property type="entry name" value="UCP029755"/>
    <property type="match status" value="1"/>
</dbReference>
<dbReference type="SUPFAM" id="SSF160920">
    <property type="entry name" value="PSTPO5379-like"/>
    <property type="match status" value="1"/>
</dbReference>